<protein>
    <recommendedName>
        <fullName evidence="1">Phenylalanine--tRNA ligase alpha subunit</fullName>
        <ecNumber evidence="1">6.1.1.20</ecNumber>
    </recommendedName>
    <alternativeName>
        <fullName evidence="1">Phenylalanyl-tRNA synthetase alpha subunit</fullName>
        <shortName evidence="1">PheRS</shortName>
    </alternativeName>
</protein>
<proteinExistence type="inferred from homology"/>
<keyword id="KW-0030">Aminoacyl-tRNA synthetase</keyword>
<keyword id="KW-0067">ATP-binding</keyword>
<keyword id="KW-0963">Cytoplasm</keyword>
<keyword id="KW-0436">Ligase</keyword>
<keyword id="KW-0460">Magnesium</keyword>
<keyword id="KW-0479">Metal-binding</keyword>
<keyword id="KW-0547">Nucleotide-binding</keyword>
<keyword id="KW-0648">Protein biosynthesis</keyword>
<keyword id="KW-1185">Reference proteome</keyword>
<dbReference type="EC" id="6.1.1.20" evidence="1"/>
<dbReference type="EMBL" id="AE010299">
    <property type="protein sequence ID" value="AAM03624.1"/>
    <property type="molecule type" value="Genomic_DNA"/>
</dbReference>
<dbReference type="RefSeq" id="WP_011020229.1">
    <property type="nucleotide sequence ID" value="NC_003552.1"/>
</dbReference>
<dbReference type="SMR" id="Q8TUA2"/>
<dbReference type="FunCoup" id="Q8TUA2">
    <property type="interactions" value="264"/>
</dbReference>
<dbReference type="STRING" id="188937.MA_0171"/>
<dbReference type="EnsemblBacteria" id="AAM03624">
    <property type="protein sequence ID" value="AAM03624"/>
    <property type="gene ID" value="MA_0171"/>
</dbReference>
<dbReference type="GeneID" id="1472063"/>
<dbReference type="KEGG" id="mac:MA_0171"/>
<dbReference type="HOGENOM" id="CLU_025086_2_2_2"/>
<dbReference type="InParanoid" id="Q8TUA2"/>
<dbReference type="OrthoDB" id="372178at2157"/>
<dbReference type="PhylomeDB" id="Q8TUA2"/>
<dbReference type="Proteomes" id="UP000002487">
    <property type="component" value="Chromosome"/>
</dbReference>
<dbReference type="GO" id="GO:0005737">
    <property type="term" value="C:cytoplasm"/>
    <property type="evidence" value="ECO:0000318"/>
    <property type="project" value="GO_Central"/>
</dbReference>
<dbReference type="GO" id="GO:0005524">
    <property type="term" value="F:ATP binding"/>
    <property type="evidence" value="ECO:0007669"/>
    <property type="project" value="UniProtKB-UniRule"/>
</dbReference>
<dbReference type="GO" id="GO:0000287">
    <property type="term" value="F:magnesium ion binding"/>
    <property type="evidence" value="ECO:0007669"/>
    <property type="project" value="UniProtKB-UniRule"/>
</dbReference>
<dbReference type="GO" id="GO:0004826">
    <property type="term" value="F:phenylalanine-tRNA ligase activity"/>
    <property type="evidence" value="ECO:0000318"/>
    <property type="project" value="GO_Central"/>
</dbReference>
<dbReference type="GO" id="GO:0000049">
    <property type="term" value="F:tRNA binding"/>
    <property type="evidence" value="ECO:0007669"/>
    <property type="project" value="InterPro"/>
</dbReference>
<dbReference type="GO" id="GO:0006432">
    <property type="term" value="P:phenylalanyl-tRNA aminoacylation"/>
    <property type="evidence" value="ECO:0000318"/>
    <property type="project" value="GO_Central"/>
</dbReference>
<dbReference type="CDD" id="cd00496">
    <property type="entry name" value="PheRS_alpha_core"/>
    <property type="match status" value="1"/>
</dbReference>
<dbReference type="FunFam" id="3.30.930.10:FF:000095">
    <property type="entry name" value="Phenylalanine--tRNA ligase alpha subunit"/>
    <property type="match status" value="1"/>
</dbReference>
<dbReference type="Gene3D" id="1.10.10.2320">
    <property type="match status" value="1"/>
</dbReference>
<dbReference type="Gene3D" id="1.10.10.2330">
    <property type="match status" value="1"/>
</dbReference>
<dbReference type="Gene3D" id="3.30.1370.240">
    <property type="match status" value="1"/>
</dbReference>
<dbReference type="Gene3D" id="3.30.930.10">
    <property type="entry name" value="Bira Bifunctional Protein, Domain 2"/>
    <property type="match status" value="1"/>
</dbReference>
<dbReference type="HAMAP" id="MF_00282">
    <property type="entry name" value="Phe_tRNA_synth_alpha2"/>
    <property type="match status" value="1"/>
</dbReference>
<dbReference type="InterPro" id="IPR006195">
    <property type="entry name" value="aa-tRNA-synth_II"/>
</dbReference>
<dbReference type="InterPro" id="IPR045864">
    <property type="entry name" value="aa-tRNA-synth_II/BPL/LPL"/>
</dbReference>
<dbReference type="InterPro" id="IPR004529">
    <property type="entry name" value="Phe-tRNA-synth_IIc_asu"/>
</dbReference>
<dbReference type="InterPro" id="IPR022917">
    <property type="entry name" value="Phe_tRNA_ligase_alpha_bac/arc"/>
</dbReference>
<dbReference type="InterPro" id="IPR002319">
    <property type="entry name" value="Phenylalanyl-tRNA_Synthase"/>
</dbReference>
<dbReference type="NCBIfam" id="TIGR00468">
    <property type="entry name" value="pheS"/>
    <property type="match status" value="1"/>
</dbReference>
<dbReference type="NCBIfam" id="NF003210">
    <property type="entry name" value="PRK04172.1"/>
    <property type="match status" value="1"/>
</dbReference>
<dbReference type="PANTHER" id="PTHR11538:SF40">
    <property type="entry name" value="PHENYLALANINE--TRNA LIGASE ALPHA SUBUNIT"/>
    <property type="match status" value="1"/>
</dbReference>
<dbReference type="PANTHER" id="PTHR11538">
    <property type="entry name" value="PHENYLALANYL-TRNA SYNTHETASE"/>
    <property type="match status" value="1"/>
</dbReference>
<dbReference type="Pfam" id="PF01409">
    <property type="entry name" value="tRNA-synt_2d"/>
    <property type="match status" value="1"/>
</dbReference>
<dbReference type="SUPFAM" id="SSF55681">
    <property type="entry name" value="Class II aaRS and biotin synthetases"/>
    <property type="match status" value="1"/>
</dbReference>
<dbReference type="PROSITE" id="PS50862">
    <property type="entry name" value="AA_TRNA_LIGASE_II"/>
    <property type="match status" value="1"/>
</dbReference>
<comment type="catalytic activity">
    <reaction evidence="1">
        <text>tRNA(Phe) + L-phenylalanine + ATP = L-phenylalanyl-tRNA(Phe) + AMP + diphosphate + H(+)</text>
        <dbReference type="Rhea" id="RHEA:19413"/>
        <dbReference type="Rhea" id="RHEA-COMP:9668"/>
        <dbReference type="Rhea" id="RHEA-COMP:9699"/>
        <dbReference type="ChEBI" id="CHEBI:15378"/>
        <dbReference type="ChEBI" id="CHEBI:30616"/>
        <dbReference type="ChEBI" id="CHEBI:33019"/>
        <dbReference type="ChEBI" id="CHEBI:58095"/>
        <dbReference type="ChEBI" id="CHEBI:78442"/>
        <dbReference type="ChEBI" id="CHEBI:78531"/>
        <dbReference type="ChEBI" id="CHEBI:456215"/>
        <dbReference type="EC" id="6.1.1.20"/>
    </reaction>
</comment>
<comment type="cofactor">
    <cofactor evidence="1">
        <name>Mg(2+)</name>
        <dbReference type="ChEBI" id="CHEBI:18420"/>
    </cofactor>
    <text evidence="1">Binds 2 magnesium ions per tetramer.</text>
</comment>
<comment type="subunit">
    <text evidence="1">Tetramer of two alpha and two beta subunits.</text>
</comment>
<comment type="subcellular location">
    <subcellularLocation>
        <location evidence="1">Cytoplasm</location>
    </subcellularLocation>
</comment>
<comment type="similarity">
    <text evidence="1">Belongs to the class-II aminoacyl-tRNA synthetase family. Phe-tRNA synthetase alpha subunit type 2 subfamily.</text>
</comment>
<sequence>MSAQDNLTINEKKVLLALEELGSAAPDKLEEKSGLQVDAAMQAAFMLQEKGLASVSEKVLERYSLTKEGEEYTKTGLPERQIIDALKAPAPLEELRSRFSPKTVGIATGWLIKKGWAKVENGVMVPSGNAPAGRDEEVLAAFAGKAKTLEELAADEGTVKELLKRKLVIKHEEKSRTVSVTGAGSALAAEGIVLEEEIAQLTPELLKSGAWKGKKFRPYRLDIAPNPLYGVKIHPYRRLIEQMRQIFLEMGFTEIKGGIIQSSFWNFDALFQPQDHPARDMQDTFHLGSICQLPAEYSDKVAAMHESGGDIDSCGWGGIWDRELARRNVLRTHTTSVTIKYLADNPEPPVKAFCIDRAYRRETIDPTHTPEFEQLEGVVMDKDMSFADLLGLLAEFYHRMGFEEVRFRPGYFPYTEPSVEPEVYVDGLGWVELGGAGVFRKEVTEPFGIKEPVLAWGLGVSRLAMLKLGLKDLRLLYQSDIDWLRKSEVCRI</sequence>
<reference key="1">
    <citation type="journal article" date="2002" name="Genome Res.">
        <title>The genome of Methanosarcina acetivorans reveals extensive metabolic and physiological diversity.</title>
        <authorList>
            <person name="Galagan J.E."/>
            <person name="Nusbaum C."/>
            <person name="Roy A."/>
            <person name="Endrizzi M.G."/>
            <person name="Macdonald P."/>
            <person name="FitzHugh W."/>
            <person name="Calvo S."/>
            <person name="Engels R."/>
            <person name="Smirnov S."/>
            <person name="Atnoor D."/>
            <person name="Brown A."/>
            <person name="Allen N."/>
            <person name="Naylor J."/>
            <person name="Stange-Thomann N."/>
            <person name="DeArellano K."/>
            <person name="Johnson R."/>
            <person name="Linton L."/>
            <person name="McEwan P."/>
            <person name="McKernan K."/>
            <person name="Talamas J."/>
            <person name="Tirrell A."/>
            <person name="Ye W."/>
            <person name="Zimmer A."/>
            <person name="Barber R.D."/>
            <person name="Cann I."/>
            <person name="Graham D.E."/>
            <person name="Grahame D.A."/>
            <person name="Guss A.M."/>
            <person name="Hedderich R."/>
            <person name="Ingram-Smith C."/>
            <person name="Kuettner H.C."/>
            <person name="Krzycki J.A."/>
            <person name="Leigh J.A."/>
            <person name="Li W."/>
            <person name="Liu J."/>
            <person name="Mukhopadhyay B."/>
            <person name="Reeve J.N."/>
            <person name="Smith K."/>
            <person name="Springer T.A."/>
            <person name="Umayam L.A."/>
            <person name="White O."/>
            <person name="White R.H."/>
            <person name="de Macario E.C."/>
            <person name="Ferry J.G."/>
            <person name="Jarrell K.F."/>
            <person name="Jing H."/>
            <person name="Macario A.J.L."/>
            <person name="Paulsen I.T."/>
            <person name="Pritchett M."/>
            <person name="Sowers K.R."/>
            <person name="Swanson R.V."/>
            <person name="Zinder S.H."/>
            <person name="Lander E."/>
            <person name="Metcalf W.W."/>
            <person name="Birren B."/>
        </authorList>
    </citation>
    <scope>NUCLEOTIDE SEQUENCE [LARGE SCALE GENOMIC DNA]</scope>
    <source>
        <strain>ATCC 35395 / DSM 2834 / JCM 12185 / C2A</strain>
    </source>
</reference>
<feature type="chain" id="PRO_0000126809" description="Phenylalanine--tRNA ligase alpha subunit">
    <location>
        <begin position="1"/>
        <end position="492"/>
    </location>
</feature>
<feature type="binding site" evidence="1">
    <location>
        <position position="335"/>
    </location>
    <ligand>
        <name>L-phenylalanine</name>
        <dbReference type="ChEBI" id="CHEBI:58095"/>
    </ligand>
</feature>
<feature type="binding site" evidence="1">
    <location>
        <begin position="374"/>
        <end position="376"/>
    </location>
    <ligand>
        <name>L-phenylalanine</name>
        <dbReference type="ChEBI" id="CHEBI:58095"/>
    </ligand>
</feature>
<feature type="binding site" evidence="1">
    <location>
        <position position="414"/>
    </location>
    <ligand>
        <name>L-phenylalanine</name>
        <dbReference type="ChEBI" id="CHEBI:58095"/>
    </ligand>
</feature>
<feature type="binding site" evidence="1">
    <location>
        <position position="416"/>
    </location>
    <ligand>
        <name>Mg(2+)</name>
        <dbReference type="ChEBI" id="CHEBI:18420"/>
        <note>shared with beta subunit</note>
    </ligand>
</feature>
<feature type="binding site" evidence="1">
    <location>
        <position position="439"/>
    </location>
    <ligand>
        <name>L-phenylalanine</name>
        <dbReference type="ChEBI" id="CHEBI:58095"/>
    </ligand>
</feature>
<name>SYFA_METAC</name>
<accession>Q8TUA2</accession>
<organism>
    <name type="scientific">Methanosarcina acetivorans (strain ATCC 35395 / DSM 2834 / JCM 12185 / C2A)</name>
    <dbReference type="NCBI Taxonomy" id="188937"/>
    <lineage>
        <taxon>Archaea</taxon>
        <taxon>Methanobacteriati</taxon>
        <taxon>Methanobacteriota</taxon>
        <taxon>Stenosarchaea group</taxon>
        <taxon>Methanomicrobia</taxon>
        <taxon>Methanosarcinales</taxon>
        <taxon>Methanosarcinaceae</taxon>
        <taxon>Methanosarcina</taxon>
    </lineage>
</organism>
<gene>
    <name evidence="1" type="primary">pheS</name>
    <name type="ordered locus">MA_0171</name>
</gene>
<evidence type="ECO:0000255" key="1">
    <source>
        <dbReference type="HAMAP-Rule" id="MF_00282"/>
    </source>
</evidence>